<protein>
    <recommendedName>
        <fullName>Restriction inhibitor protein ral</fullName>
    </recommendedName>
    <alternativeName>
        <fullName>Antirestriction protein</fullName>
    </alternativeName>
</protein>
<proteinExistence type="inferred from homology"/>
<keyword id="KW-0945">Host-virus interaction</keyword>
<keyword id="KW-1090">Inhibition of host innate immune response by virus</keyword>
<keyword id="KW-1258">Restriction-modification system evasion by virus</keyword>
<keyword id="KW-0899">Viral immunoevasion</keyword>
<comment type="function">
    <text evidence="1">Ral interferes with the cleavage of DNA by E.coli EcoK restriction-modification system, by modifying the activity of the host methylase. This modulation allows incoming, unmodified phages to escape the host's restriction system.</text>
</comment>
<comment type="similarity">
    <text evidence="2">Belongs to the lambda phage ral family.</text>
</comment>
<dbReference type="EMBL" id="AH007390">
    <property type="protein sequence ID" value="AAD15034.1"/>
    <property type="molecule type" value="Genomic_DNA"/>
</dbReference>
<dbReference type="GO" id="GO:0099018">
    <property type="term" value="P:symbiont-mediated evasion of host restriction-modification system"/>
    <property type="evidence" value="ECO:0007669"/>
    <property type="project" value="UniProtKB-KW"/>
</dbReference>
<dbReference type="GO" id="GO:0052170">
    <property type="term" value="P:symbiont-mediated suppression of host innate immune response"/>
    <property type="evidence" value="ECO:0007669"/>
    <property type="project" value="UniProtKB-KW"/>
</dbReference>
<dbReference type="InterPro" id="IPR022759">
    <property type="entry name" value="Antirestriction_protein_Ral"/>
</dbReference>
<dbReference type="Pfam" id="PF11058">
    <property type="entry name" value="Ral"/>
    <property type="match status" value="1"/>
</dbReference>
<organismHost>
    <name type="scientific">Bacillus subtilis</name>
    <dbReference type="NCBI Taxonomy" id="1423"/>
</organismHost>
<name>RAL_BPPH3</name>
<reference key="1">
    <citation type="journal article" date="1985" name="J. Mol. Biol.">
        <title>Conservation of genome form but not sequence in the transcription antitermination determinants of bacteriophages lambda, phi 21 and P22.</title>
        <authorList>
            <person name="Franklin N.C."/>
        </authorList>
    </citation>
    <scope>NUCLEOTIDE SEQUENCE [GENOMIC DNA]</scope>
</reference>
<sequence>MTTTIDKNQWCGQFKRCNGCKLQSECMVKPEEMFPVMEDGKYVDKWAIRTTAMIARELGKQLDEDARLCSLSVFDA</sequence>
<organism>
    <name type="scientific">Enterobacteria phage phi21</name>
    <name type="common">Bacteriophage phi-21</name>
    <dbReference type="NCBI Taxonomy" id="10737"/>
    <lineage>
        <taxon>Viruses</taxon>
        <taxon>Duplodnaviria</taxon>
        <taxon>Heunggongvirae</taxon>
        <taxon>Uroviricota</taxon>
        <taxon>Caudoviricetes</taxon>
    </lineage>
</organism>
<gene>
    <name type="primary">ral</name>
</gene>
<accession>P07235</accession>
<feature type="chain" id="PRO_0000077698" description="Restriction inhibitor protein ral">
    <location>
        <begin position="1"/>
        <end position="76"/>
    </location>
</feature>
<evidence type="ECO:0000250" key="1">
    <source>
        <dbReference type="UniProtKB" id="P03703"/>
    </source>
</evidence>
<evidence type="ECO:0000305" key="2"/>